<sequence>MKNSDIIVLDFGSQYTQLIARRLREQGVYTEILPFNAKISQIKEKNPKGLILSGGPASVYAKDAYFPNDEIFNLNLPILGICYGMQLIAYHFGASVTPTNKKEYGKSNLKFVSENALLKDTKDGQIVWMSHSDKVENLPDGFKTIAVSENSPFCAFCDEKRKIYALQFHPEVAHSECGDKILKNFAKYICDCESTWNMGNFAKIKCEEIKKQVGKDRVLCAVSGGVDSSVVAALLAHCIKENLIVVFVDNGLLRTDEAKQVEQTFKLKLGVELISIDASELFLGRLKGITDPEEKRKIIGKTFIEVFEREAKKHQNVKYLAQGTLYTDIIESSVVGSSKTIKSHHNVGGLPKDMKFKLIEPLKEIFKDEVRKLGTELGLSPDLVYRHPFPGPGLAIRILGEITPEKLCVLRKADVILRDELKSSGWYNKTWQAFCVLLNVNSVGVMGDNRTYENAVCIRVVDASDGMTASFSRLPYDLLENISRRIINEVDGINRVVYDISSKPPATIEWE</sequence>
<protein>
    <recommendedName>
        <fullName evidence="1">GMP synthase [glutamine-hydrolyzing]</fullName>
        <ecNumber evidence="1">6.3.5.2</ecNumber>
    </recommendedName>
    <alternativeName>
        <fullName evidence="1">GMP synthetase</fullName>
    </alternativeName>
    <alternativeName>
        <fullName evidence="1">Glutamine amidotransferase</fullName>
    </alternativeName>
</protein>
<gene>
    <name evidence="1" type="primary">guaA</name>
    <name type="ordered locus">CHAB381_0638</name>
</gene>
<proteinExistence type="inferred from homology"/>
<feature type="chain" id="PRO_1000120246" description="GMP synthase [glutamine-hydrolyzing]">
    <location>
        <begin position="1"/>
        <end position="511"/>
    </location>
</feature>
<feature type="domain" description="Glutamine amidotransferase type-1" evidence="1">
    <location>
        <begin position="5"/>
        <end position="195"/>
    </location>
</feature>
<feature type="domain" description="GMPS ATP-PPase" evidence="1">
    <location>
        <begin position="196"/>
        <end position="386"/>
    </location>
</feature>
<feature type="active site" description="Nucleophile" evidence="1">
    <location>
        <position position="82"/>
    </location>
</feature>
<feature type="active site" evidence="1">
    <location>
        <position position="169"/>
    </location>
</feature>
<feature type="active site" evidence="1">
    <location>
        <position position="171"/>
    </location>
</feature>
<feature type="binding site" evidence="1">
    <location>
        <begin position="223"/>
        <end position="229"/>
    </location>
    <ligand>
        <name>ATP</name>
        <dbReference type="ChEBI" id="CHEBI:30616"/>
    </ligand>
</feature>
<accession>A7I131</accession>
<keyword id="KW-0067">ATP-binding</keyword>
<keyword id="KW-0315">Glutamine amidotransferase</keyword>
<keyword id="KW-0332">GMP biosynthesis</keyword>
<keyword id="KW-0436">Ligase</keyword>
<keyword id="KW-0547">Nucleotide-binding</keyword>
<keyword id="KW-0658">Purine biosynthesis</keyword>
<keyword id="KW-1185">Reference proteome</keyword>
<organism>
    <name type="scientific">Campylobacter hominis (strain ATCC BAA-381 / DSM 21671 / CCUG 45161 / LMG 19568 / NCTC 13146 / CH001A)</name>
    <dbReference type="NCBI Taxonomy" id="360107"/>
    <lineage>
        <taxon>Bacteria</taxon>
        <taxon>Pseudomonadati</taxon>
        <taxon>Campylobacterota</taxon>
        <taxon>Epsilonproteobacteria</taxon>
        <taxon>Campylobacterales</taxon>
        <taxon>Campylobacteraceae</taxon>
        <taxon>Campylobacter</taxon>
    </lineage>
</organism>
<dbReference type="EC" id="6.3.5.2" evidence="1"/>
<dbReference type="EMBL" id="CP000776">
    <property type="protein sequence ID" value="ABS51453.1"/>
    <property type="molecule type" value="Genomic_DNA"/>
</dbReference>
<dbReference type="RefSeq" id="WP_012108509.1">
    <property type="nucleotide sequence ID" value="NC_009714.1"/>
</dbReference>
<dbReference type="SMR" id="A7I131"/>
<dbReference type="STRING" id="360107.CHAB381_0638"/>
<dbReference type="MEROPS" id="C26.957"/>
<dbReference type="KEGG" id="cha:CHAB381_0638"/>
<dbReference type="eggNOG" id="COG0519">
    <property type="taxonomic scope" value="Bacteria"/>
</dbReference>
<dbReference type="HOGENOM" id="CLU_014340_0_5_7"/>
<dbReference type="OrthoDB" id="9802219at2"/>
<dbReference type="UniPathway" id="UPA00189">
    <property type="reaction ID" value="UER00296"/>
</dbReference>
<dbReference type="Proteomes" id="UP000002407">
    <property type="component" value="Chromosome"/>
</dbReference>
<dbReference type="GO" id="GO:0005829">
    <property type="term" value="C:cytosol"/>
    <property type="evidence" value="ECO:0007669"/>
    <property type="project" value="TreeGrafter"/>
</dbReference>
<dbReference type="GO" id="GO:0005524">
    <property type="term" value="F:ATP binding"/>
    <property type="evidence" value="ECO:0007669"/>
    <property type="project" value="UniProtKB-UniRule"/>
</dbReference>
<dbReference type="GO" id="GO:0003921">
    <property type="term" value="F:GMP synthase activity"/>
    <property type="evidence" value="ECO:0007669"/>
    <property type="project" value="InterPro"/>
</dbReference>
<dbReference type="CDD" id="cd01742">
    <property type="entry name" value="GATase1_GMP_Synthase"/>
    <property type="match status" value="1"/>
</dbReference>
<dbReference type="CDD" id="cd01997">
    <property type="entry name" value="GMP_synthase_C"/>
    <property type="match status" value="1"/>
</dbReference>
<dbReference type="FunFam" id="3.30.300.10:FF:000002">
    <property type="entry name" value="GMP synthase [glutamine-hydrolyzing]"/>
    <property type="match status" value="1"/>
</dbReference>
<dbReference type="FunFam" id="3.40.50.620:FF:000001">
    <property type="entry name" value="GMP synthase [glutamine-hydrolyzing]"/>
    <property type="match status" value="1"/>
</dbReference>
<dbReference type="FunFam" id="3.40.50.880:FF:000001">
    <property type="entry name" value="GMP synthase [glutamine-hydrolyzing]"/>
    <property type="match status" value="1"/>
</dbReference>
<dbReference type="Gene3D" id="3.30.300.10">
    <property type="match status" value="1"/>
</dbReference>
<dbReference type="Gene3D" id="3.40.50.880">
    <property type="match status" value="1"/>
</dbReference>
<dbReference type="Gene3D" id="3.40.50.620">
    <property type="entry name" value="HUPs"/>
    <property type="match status" value="1"/>
</dbReference>
<dbReference type="HAMAP" id="MF_00344">
    <property type="entry name" value="GMP_synthase"/>
    <property type="match status" value="1"/>
</dbReference>
<dbReference type="InterPro" id="IPR029062">
    <property type="entry name" value="Class_I_gatase-like"/>
</dbReference>
<dbReference type="InterPro" id="IPR017926">
    <property type="entry name" value="GATASE"/>
</dbReference>
<dbReference type="InterPro" id="IPR001674">
    <property type="entry name" value="GMP_synth_C"/>
</dbReference>
<dbReference type="InterPro" id="IPR004739">
    <property type="entry name" value="GMP_synth_GATase"/>
</dbReference>
<dbReference type="InterPro" id="IPR022955">
    <property type="entry name" value="GMP_synthase"/>
</dbReference>
<dbReference type="InterPro" id="IPR025777">
    <property type="entry name" value="GMPS_ATP_PPase_dom"/>
</dbReference>
<dbReference type="InterPro" id="IPR022310">
    <property type="entry name" value="NAD/GMP_synthase"/>
</dbReference>
<dbReference type="InterPro" id="IPR014729">
    <property type="entry name" value="Rossmann-like_a/b/a_fold"/>
</dbReference>
<dbReference type="NCBIfam" id="TIGR00884">
    <property type="entry name" value="guaA_Cterm"/>
    <property type="match status" value="1"/>
</dbReference>
<dbReference type="NCBIfam" id="TIGR00888">
    <property type="entry name" value="guaA_Nterm"/>
    <property type="match status" value="1"/>
</dbReference>
<dbReference type="NCBIfam" id="NF000848">
    <property type="entry name" value="PRK00074.1"/>
    <property type="match status" value="1"/>
</dbReference>
<dbReference type="PANTHER" id="PTHR11922:SF2">
    <property type="entry name" value="GMP SYNTHASE [GLUTAMINE-HYDROLYZING]"/>
    <property type="match status" value="1"/>
</dbReference>
<dbReference type="PANTHER" id="PTHR11922">
    <property type="entry name" value="GMP SYNTHASE-RELATED"/>
    <property type="match status" value="1"/>
</dbReference>
<dbReference type="Pfam" id="PF00117">
    <property type="entry name" value="GATase"/>
    <property type="match status" value="1"/>
</dbReference>
<dbReference type="Pfam" id="PF00958">
    <property type="entry name" value="GMP_synt_C"/>
    <property type="match status" value="1"/>
</dbReference>
<dbReference type="Pfam" id="PF02540">
    <property type="entry name" value="NAD_synthase"/>
    <property type="match status" value="1"/>
</dbReference>
<dbReference type="PRINTS" id="PR00097">
    <property type="entry name" value="ANTSNTHASEII"/>
</dbReference>
<dbReference type="PRINTS" id="PR00099">
    <property type="entry name" value="CPSGATASE"/>
</dbReference>
<dbReference type="PRINTS" id="PR00096">
    <property type="entry name" value="GATASE"/>
</dbReference>
<dbReference type="SUPFAM" id="SSF52402">
    <property type="entry name" value="Adenine nucleotide alpha hydrolases-like"/>
    <property type="match status" value="1"/>
</dbReference>
<dbReference type="SUPFAM" id="SSF52317">
    <property type="entry name" value="Class I glutamine amidotransferase-like"/>
    <property type="match status" value="1"/>
</dbReference>
<dbReference type="SUPFAM" id="SSF54810">
    <property type="entry name" value="GMP synthetase C-terminal dimerisation domain"/>
    <property type="match status" value="1"/>
</dbReference>
<dbReference type="PROSITE" id="PS51273">
    <property type="entry name" value="GATASE_TYPE_1"/>
    <property type="match status" value="1"/>
</dbReference>
<dbReference type="PROSITE" id="PS51553">
    <property type="entry name" value="GMPS_ATP_PPASE"/>
    <property type="match status" value="1"/>
</dbReference>
<reference key="1">
    <citation type="submission" date="2007-07" db="EMBL/GenBank/DDBJ databases">
        <title>Complete genome sequence of Campylobacter hominis ATCC BAA-381, a commensal isolated from the human gastrointestinal tract.</title>
        <authorList>
            <person name="Fouts D.E."/>
            <person name="Mongodin E.F."/>
            <person name="Puiu D."/>
            <person name="Sebastian Y."/>
            <person name="Miller W.G."/>
            <person name="Mandrell R.E."/>
            <person name="Nelson K.E."/>
        </authorList>
    </citation>
    <scope>NUCLEOTIDE SEQUENCE [LARGE SCALE GENOMIC DNA]</scope>
    <source>
        <strain>ATCC BAA-381 / DSM 21671 / CCUG 45161 / LMG 19568 / NCTC 13146 / CH001A</strain>
    </source>
</reference>
<evidence type="ECO:0000255" key="1">
    <source>
        <dbReference type="HAMAP-Rule" id="MF_00344"/>
    </source>
</evidence>
<comment type="function">
    <text evidence="1">Catalyzes the synthesis of GMP from XMP.</text>
</comment>
<comment type="catalytic activity">
    <reaction evidence="1">
        <text>XMP + L-glutamine + ATP + H2O = GMP + L-glutamate + AMP + diphosphate + 2 H(+)</text>
        <dbReference type="Rhea" id="RHEA:11680"/>
        <dbReference type="ChEBI" id="CHEBI:15377"/>
        <dbReference type="ChEBI" id="CHEBI:15378"/>
        <dbReference type="ChEBI" id="CHEBI:29985"/>
        <dbReference type="ChEBI" id="CHEBI:30616"/>
        <dbReference type="ChEBI" id="CHEBI:33019"/>
        <dbReference type="ChEBI" id="CHEBI:57464"/>
        <dbReference type="ChEBI" id="CHEBI:58115"/>
        <dbReference type="ChEBI" id="CHEBI:58359"/>
        <dbReference type="ChEBI" id="CHEBI:456215"/>
        <dbReference type="EC" id="6.3.5.2"/>
    </reaction>
</comment>
<comment type="pathway">
    <text evidence="1">Purine metabolism; GMP biosynthesis; GMP from XMP (L-Gln route): step 1/1.</text>
</comment>
<comment type="subunit">
    <text evidence="1">Homodimer.</text>
</comment>
<name>GUAA_CAMHC</name>